<gene>
    <name type="primary">Efcab2</name>
    <name evidence="1" type="synonym">Drc8</name>
</gene>
<protein>
    <recommendedName>
        <fullName evidence="1">Dynein regulatory complex protein 8</fullName>
    </recommendedName>
    <alternativeName>
        <fullName>EF-hand calcium-binding domain-containing protein 2</fullName>
    </alternativeName>
</protein>
<keyword id="KW-0966">Cell projection</keyword>
<keyword id="KW-0969">Cilium</keyword>
<keyword id="KW-0963">Cytoplasm</keyword>
<keyword id="KW-0206">Cytoskeleton</keyword>
<keyword id="KW-0282">Flagellum</keyword>
<keyword id="KW-1185">Reference proteome</keyword>
<keyword id="KW-0677">Repeat</keyword>
<reference key="1">
    <citation type="journal article" date="2005" name="Science">
        <title>The transcriptional landscape of the mammalian genome.</title>
        <authorList>
            <person name="Carninci P."/>
            <person name="Kasukawa T."/>
            <person name="Katayama S."/>
            <person name="Gough J."/>
            <person name="Frith M.C."/>
            <person name="Maeda N."/>
            <person name="Oyama R."/>
            <person name="Ravasi T."/>
            <person name="Lenhard B."/>
            <person name="Wells C."/>
            <person name="Kodzius R."/>
            <person name="Shimokawa K."/>
            <person name="Bajic V.B."/>
            <person name="Brenner S.E."/>
            <person name="Batalov S."/>
            <person name="Forrest A.R."/>
            <person name="Zavolan M."/>
            <person name="Davis M.J."/>
            <person name="Wilming L.G."/>
            <person name="Aidinis V."/>
            <person name="Allen J.E."/>
            <person name="Ambesi-Impiombato A."/>
            <person name="Apweiler R."/>
            <person name="Aturaliya R.N."/>
            <person name="Bailey T.L."/>
            <person name="Bansal M."/>
            <person name="Baxter L."/>
            <person name="Beisel K.W."/>
            <person name="Bersano T."/>
            <person name="Bono H."/>
            <person name="Chalk A.M."/>
            <person name="Chiu K.P."/>
            <person name="Choudhary V."/>
            <person name="Christoffels A."/>
            <person name="Clutterbuck D.R."/>
            <person name="Crowe M.L."/>
            <person name="Dalla E."/>
            <person name="Dalrymple B.P."/>
            <person name="de Bono B."/>
            <person name="Della Gatta G."/>
            <person name="di Bernardo D."/>
            <person name="Down T."/>
            <person name="Engstrom P."/>
            <person name="Fagiolini M."/>
            <person name="Faulkner G."/>
            <person name="Fletcher C.F."/>
            <person name="Fukushima T."/>
            <person name="Furuno M."/>
            <person name="Futaki S."/>
            <person name="Gariboldi M."/>
            <person name="Georgii-Hemming P."/>
            <person name="Gingeras T.R."/>
            <person name="Gojobori T."/>
            <person name="Green R.E."/>
            <person name="Gustincich S."/>
            <person name="Harbers M."/>
            <person name="Hayashi Y."/>
            <person name="Hensch T.K."/>
            <person name="Hirokawa N."/>
            <person name="Hill D."/>
            <person name="Huminiecki L."/>
            <person name="Iacono M."/>
            <person name="Ikeo K."/>
            <person name="Iwama A."/>
            <person name="Ishikawa T."/>
            <person name="Jakt M."/>
            <person name="Kanapin A."/>
            <person name="Katoh M."/>
            <person name="Kawasawa Y."/>
            <person name="Kelso J."/>
            <person name="Kitamura H."/>
            <person name="Kitano H."/>
            <person name="Kollias G."/>
            <person name="Krishnan S.P."/>
            <person name="Kruger A."/>
            <person name="Kummerfeld S.K."/>
            <person name="Kurochkin I.V."/>
            <person name="Lareau L.F."/>
            <person name="Lazarevic D."/>
            <person name="Lipovich L."/>
            <person name="Liu J."/>
            <person name="Liuni S."/>
            <person name="McWilliam S."/>
            <person name="Madan Babu M."/>
            <person name="Madera M."/>
            <person name="Marchionni L."/>
            <person name="Matsuda H."/>
            <person name="Matsuzawa S."/>
            <person name="Miki H."/>
            <person name="Mignone F."/>
            <person name="Miyake S."/>
            <person name="Morris K."/>
            <person name="Mottagui-Tabar S."/>
            <person name="Mulder N."/>
            <person name="Nakano N."/>
            <person name="Nakauchi H."/>
            <person name="Ng P."/>
            <person name="Nilsson R."/>
            <person name="Nishiguchi S."/>
            <person name="Nishikawa S."/>
            <person name="Nori F."/>
            <person name="Ohara O."/>
            <person name="Okazaki Y."/>
            <person name="Orlando V."/>
            <person name="Pang K.C."/>
            <person name="Pavan W.J."/>
            <person name="Pavesi G."/>
            <person name="Pesole G."/>
            <person name="Petrovsky N."/>
            <person name="Piazza S."/>
            <person name="Reed J."/>
            <person name="Reid J.F."/>
            <person name="Ring B.Z."/>
            <person name="Ringwald M."/>
            <person name="Rost B."/>
            <person name="Ruan Y."/>
            <person name="Salzberg S.L."/>
            <person name="Sandelin A."/>
            <person name="Schneider C."/>
            <person name="Schoenbach C."/>
            <person name="Sekiguchi K."/>
            <person name="Semple C.A."/>
            <person name="Seno S."/>
            <person name="Sessa L."/>
            <person name="Sheng Y."/>
            <person name="Shibata Y."/>
            <person name="Shimada H."/>
            <person name="Shimada K."/>
            <person name="Silva D."/>
            <person name="Sinclair B."/>
            <person name="Sperling S."/>
            <person name="Stupka E."/>
            <person name="Sugiura K."/>
            <person name="Sultana R."/>
            <person name="Takenaka Y."/>
            <person name="Taki K."/>
            <person name="Tammoja K."/>
            <person name="Tan S.L."/>
            <person name="Tang S."/>
            <person name="Taylor M.S."/>
            <person name="Tegner J."/>
            <person name="Teichmann S.A."/>
            <person name="Ueda H.R."/>
            <person name="van Nimwegen E."/>
            <person name="Verardo R."/>
            <person name="Wei C.L."/>
            <person name="Yagi K."/>
            <person name="Yamanishi H."/>
            <person name="Zabarovsky E."/>
            <person name="Zhu S."/>
            <person name="Zimmer A."/>
            <person name="Hide W."/>
            <person name="Bult C."/>
            <person name="Grimmond S.M."/>
            <person name="Teasdale R.D."/>
            <person name="Liu E.T."/>
            <person name="Brusic V."/>
            <person name="Quackenbush J."/>
            <person name="Wahlestedt C."/>
            <person name="Mattick J.S."/>
            <person name="Hume D.A."/>
            <person name="Kai C."/>
            <person name="Sasaki D."/>
            <person name="Tomaru Y."/>
            <person name="Fukuda S."/>
            <person name="Kanamori-Katayama M."/>
            <person name="Suzuki M."/>
            <person name="Aoki J."/>
            <person name="Arakawa T."/>
            <person name="Iida J."/>
            <person name="Imamura K."/>
            <person name="Itoh M."/>
            <person name="Kato T."/>
            <person name="Kawaji H."/>
            <person name="Kawagashira N."/>
            <person name="Kawashima T."/>
            <person name="Kojima M."/>
            <person name="Kondo S."/>
            <person name="Konno H."/>
            <person name="Nakano K."/>
            <person name="Ninomiya N."/>
            <person name="Nishio T."/>
            <person name="Okada M."/>
            <person name="Plessy C."/>
            <person name="Shibata K."/>
            <person name="Shiraki T."/>
            <person name="Suzuki S."/>
            <person name="Tagami M."/>
            <person name="Waki K."/>
            <person name="Watahiki A."/>
            <person name="Okamura-Oho Y."/>
            <person name="Suzuki H."/>
            <person name="Kawai J."/>
            <person name="Hayashizaki Y."/>
        </authorList>
    </citation>
    <scope>NUCLEOTIDE SEQUENCE [LARGE SCALE MRNA]</scope>
    <source>
        <strain>C57BL/6J</strain>
        <tissue>Liver</tissue>
    </source>
</reference>
<reference key="2">
    <citation type="journal article" date="2004" name="Genome Res.">
        <title>The status, quality, and expansion of the NIH full-length cDNA project: the Mammalian Gene Collection (MGC).</title>
        <authorList>
            <consortium name="The MGC Project Team"/>
        </authorList>
    </citation>
    <scope>NUCLEOTIDE SEQUENCE [LARGE SCALE MRNA]</scope>
    <source>
        <strain>FVB/N</strain>
        <tissue>Kidney</tissue>
    </source>
</reference>
<reference key="3">
    <citation type="journal article" date="2010" name="Cell">
        <title>A tissue-specific atlas of mouse protein phosphorylation and expression.</title>
        <authorList>
            <person name="Huttlin E.L."/>
            <person name="Jedrychowski M.P."/>
            <person name="Elias J.E."/>
            <person name="Goswami T."/>
            <person name="Rad R."/>
            <person name="Beausoleil S.A."/>
            <person name="Villen J."/>
            <person name="Haas W."/>
            <person name="Sowa M.E."/>
            <person name="Gygi S.P."/>
        </authorList>
    </citation>
    <scope>IDENTIFICATION BY MASS SPECTROMETRY [LARGE SCALE ANALYSIS]</scope>
    <source>
        <tissue>Testis</tissue>
    </source>
</reference>
<organism>
    <name type="scientific">Mus musculus</name>
    <name type="common">Mouse</name>
    <dbReference type="NCBI Taxonomy" id="10090"/>
    <lineage>
        <taxon>Eukaryota</taxon>
        <taxon>Metazoa</taxon>
        <taxon>Chordata</taxon>
        <taxon>Craniata</taxon>
        <taxon>Vertebrata</taxon>
        <taxon>Euteleostomi</taxon>
        <taxon>Mammalia</taxon>
        <taxon>Eutheria</taxon>
        <taxon>Euarchontoglires</taxon>
        <taxon>Glires</taxon>
        <taxon>Rodentia</taxon>
        <taxon>Myomorpha</taxon>
        <taxon>Muroidea</taxon>
        <taxon>Muridae</taxon>
        <taxon>Murinae</taxon>
        <taxon>Mus</taxon>
        <taxon>Mus</taxon>
    </lineage>
</organism>
<evidence type="ECO:0000250" key="1">
    <source>
        <dbReference type="UniProtKB" id="A8J3A0"/>
    </source>
</evidence>
<evidence type="ECO:0000255" key="2">
    <source>
        <dbReference type="PROSITE-ProRule" id="PRU00448"/>
    </source>
</evidence>
<evidence type="ECO:0000305" key="3"/>
<sequence length="164" mass="18929">MAEERDAEGTEALIAELHKKIKDAFEVFDHESNNTVDVREIGTIIRSLGCCPTEGELHDFIAEIEEEEPTGYIRFEKFIPVMTRALVERRYRPAAEDILLRAFEVLDPAKRGFLTKDELVKYMTEEGEPFSQEEMEEMLSAAIDPESNTINYRDYITMMVVDEN</sequence>
<feature type="chain" id="PRO_0000253545" description="Dynein regulatory complex protein 8">
    <location>
        <begin position="1"/>
        <end position="164"/>
    </location>
</feature>
<feature type="domain" description="EF-hand 1" evidence="2">
    <location>
        <begin position="16"/>
        <end position="51"/>
    </location>
</feature>
<feature type="domain" description="EF-hand 2" evidence="2">
    <location>
        <begin position="94"/>
        <end position="129"/>
    </location>
</feature>
<dbReference type="EMBL" id="AK010880">
    <property type="protein sequence ID" value="BAB27243.1"/>
    <property type="molecule type" value="mRNA"/>
</dbReference>
<dbReference type="EMBL" id="AK015157">
    <property type="protein sequence ID" value="BAB29727.1"/>
    <property type="molecule type" value="mRNA"/>
</dbReference>
<dbReference type="EMBL" id="AK018894">
    <property type="protein sequence ID" value="BAB31477.1"/>
    <property type="molecule type" value="mRNA"/>
</dbReference>
<dbReference type="EMBL" id="AK019663">
    <property type="protein sequence ID" value="BAB31827.1"/>
    <property type="molecule type" value="mRNA"/>
</dbReference>
<dbReference type="EMBL" id="AK019802">
    <property type="protein sequence ID" value="BAB31856.1"/>
    <property type="molecule type" value="mRNA"/>
</dbReference>
<dbReference type="EMBL" id="BC025062">
    <property type="protein sequence ID" value="AAH25062.1"/>
    <property type="molecule type" value="mRNA"/>
</dbReference>
<dbReference type="CCDS" id="CCDS15557.1"/>
<dbReference type="RefSeq" id="NP_080902.1">
    <property type="nucleotide sequence ID" value="NM_026626.3"/>
</dbReference>
<dbReference type="SMR" id="Q9CQ46"/>
<dbReference type="FunCoup" id="Q9CQ46">
    <property type="interactions" value="27"/>
</dbReference>
<dbReference type="STRING" id="10090.ENSMUSP00000027775"/>
<dbReference type="iPTMnet" id="Q9CQ46"/>
<dbReference type="PhosphoSitePlus" id="Q9CQ46"/>
<dbReference type="PaxDb" id="10090-ENSMUSP00000027775"/>
<dbReference type="ProteomicsDB" id="277727"/>
<dbReference type="Antibodypedia" id="34718">
    <property type="antibodies" value="23 antibodies from 10 providers"/>
</dbReference>
<dbReference type="DNASU" id="68226"/>
<dbReference type="Ensembl" id="ENSMUST00000027775.9">
    <property type="protein sequence ID" value="ENSMUSP00000027775.8"/>
    <property type="gene ID" value="ENSMUSG00000026495.9"/>
</dbReference>
<dbReference type="GeneID" id="68226"/>
<dbReference type="KEGG" id="mmu:68226"/>
<dbReference type="UCSC" id="uc007dve.1">
    <property type="organism name" value="mouse"/>
</dbReference>
<dbReference type="AGR" id="MGI:1915476"/>
<dbReference type="CTD" id="84288"/>
<dbReference type="MGI" id="MGI:1915476">
    <property type="gene designation" value="Efcab2"/>
</dbReference>
<dbReference type="VEuPathDB" id="HostDB:ENSMUSG00000026495"/>
<dbReference type="eggNOG" id="KOG0027">
    <property type="taxonomic scope" value="Eukaryota"/>
</dbReference>
<dbReference type="GeneTree" id="ENSGT00940000160590"/>
<dbReference type="HOGENOM" id="CLU_061288_19_2_1"/>
<dbReference type="InParanoid" id="Q9CQ46"/>
<dbReference type="OMA" id="MTKEGEP"/>
<dbReference type="OrthoDB" id="14534at9989"/>
<dbReference type="PhylomeDB" id="Q9CQ46"/>
<dbReference type="TreeFam" id="TF324069"/>
<dbReference type="BioGRID-ORCS" id="68226">
    <property type="hits" value="2 hits in 77 CRISPR screens"/>
</dbReference>
<dbReference type="ChiTaRS" id="Efcab2">
    <property type="organism name" value="mouse"/>
</dbReference>
<dbReference type="PRO" id="PR:Q9CQ46"/>
<dbReference type="Proteomes" id="UP000000589">
    <property type="component" value="Chromosome 1"/>
</dbReference>
<dbReference type="RNAct" id="Q9CQ46">
    <property type="molecule type" value="protein"/>
</dbReference>
<dbReference type="Bgee" id="ENSMUSG00000026495">
    <property type="expression patterns" value="Expressed in seminiferous tubule of testis and 203 other cell types or tissues"/>
</dbReference>
<dbReference type="GO" id="GO:0005737">
    <property type="term" value="C:cytoplasm"/>
    <property type="evidence" value="ECO:0007669"/>
    <property type="project" value="UniProtKB-KW"/>
</dbReference>
<dbReference type="GO" id="GO:0005856">
    <property type="term" value="C:cytoskeleton"/>
    <property type="evidence" value="ECO:0007669"/>
    <property type="project" value="UniProtKB-KW"/>
</dbReference>
<dbReference type="GO" id="GO:0097228">
    <property type="term" value="C:sperm principal piece"/>
    <property type="evidence" value="ECO:0000314"/>
    <property type="project" value="MGI"/>
</dbReference>
<dbReference type="GO" id="GO:0005509">
    <property type="term" value="F:calcium ion binding"/>
    <property type="evidence" value="ECO:0000314"/>
    <property type="project" value="MGI"/>
</dbReference>
<dbReference type="FunFam" id="1.10.238.10:FF:000178">
    <property type="entry name" value="Calmodulin-2 A"/>
    <property type="match status" value="1"/>
</dbReference>
<dbReference type="Gene3D" id="1.10.238.10">
    <property type="entry name" value="EF-hand"/>
    <property type="match status" value="2"/>
</dbReference>
<dbReference type="InterPro" id="IPR011992">
    <property type="entry name" value="EF-hand-dom_pair"/>
</dbReference>
<dbReference type="InterPro" id="IPR002048">
    <property type="entry name" value="EF_hand_dom"/>
</dbReference>
<dbReference type="PANTHER" id="PTHR46763">
    <property type="entry name" value="DYNEIN REGULATORY COMPLEX PROTEIN 8"/>
    <property type="match status" value="1"/>
</dbReference>
<dbReference type="PANTHER" id="PTHR46763:SF1">
    <property type="entry name" value="DYNEIN REGULATORY COMPLEX PROTEIN 8"/>
    <property type="match status" value="1"/>
</dbReference>
<dbReference type="Pfam" id="PF13499">
    <property type="entry name" value="EF-hand_7"/>
    <property type="match status" value="1"/>
</dbReference>
<dbReference type="SMART" id="SM00054">
    <property type="entry name" value="EFh"/>
    <property type="match status" value="2"/>
</dbReference>
<dbReference type="SUPFAM" id="SSF47473">
    <property type="entry name" value="EF-hand"/>
    <property type="match status" value="1"/>
</dbReference>
<dbReference type="PROSITE" id="PS50222">
    <property type="entry name" value="EF_HAND_2"/>
    <property type="match status" value="2"/>
</dbReference>
<accession>Q9CQ46</accession>
<accession>Q9CS07</accession>
<proteinExistence type="evidence at protein level"/>
<comment type="function">
    <text evidence="1">Component of the nexin-dynein regulatory complex (N-DRC), a key regulator of ciliary/flagellar motility which maintains the alignment and integrity of the distal axoneme and regulates microtubule sliding in motile axonemes.</text>
</comment>
<comment type="subunit">
    <text evidence="1">Component of the nexin-dynein regulatory complex (N-DRC).</text>
</comment>
<comment type="subcellular location">
    <subcellularLocation>
        <location evidence="1">Cytoplasm</location>
        <location evidence="1">Cytoskeleton</location>
        <location evidence="1">Flagellum axoneme</location>
    </subcellularLocation>
</comment>
<comment type="similarity">
    <text evidence="3">Belongs to the DRC8 family.</text>
</comment>
<name>DRC8_MOUSE</name>